<protein>
    <recommendedName>
        <fullName evidence="1">Probable septum site-determining protein MinC</fullName>
    </recommendedName>
</protein>
<name>MINC_ACET2</name>
<feature type="chain" id="PRO_1000047825" description="Probable septum site-determining protein MinC">
    <location>
        <begin position="1"/>
        <end position="227"/>
    </location>
</feature>
<accession>A3DBK4</accession>
<keyword id="KW-0131">Cell cycle</keyword>
<keyword id="KW-0132">Cell division</keyword>
<keyword id="KW-1185">Reference proteome</keyword>
<keyword id="KW-0717">Septation</keyword>
<reference key="1">
    <citation type="submission" date="2007-02" db="EMBL/GenBank/DDBJ databases">
        <title>Complete sequence of Clostridium thermocellum ATCC 27405.</title>
        <authorList>
            <consortium name="US DOE Joint Genome Institute"/>
            <person name="Copeland A."/>
            <person name="Lucas S."/>
            <person name="Lapidus A."/>
            <person name="Barry K."/>
            <person name="Detter J.C."/>
            <person name="Glavina del Rio T."/>
            <person name="Hammon N."/>
            <person name="Israni S."/>
            <person name="Dalin E."/>
            <person name="Tice H."/>
            <person name="Pitluck S."/>
            <person name="Chertkov O."/>
            <person name="Brettin T."/>
            <person name="Bruce D."/>
            <person name="Han C."/>
            <person name="Tapia R."/>
            <person name="Gilna P."/>
            <person name="Schmutz J."/>
            <person name="Larimer F."/>
            <person name="Land M."/>
            <person name="Hauser L."/>
            <person name="Kyrpides N."/>
            <person name="Mikhailova N."/>
            <person name="Wu J.H.D."/>
            <person name="Newcomb M."/>
            <person name="Richardson P."/>
        </authorList>
    </citation>
    <scope>NUCLEOTIDE SEQUENCE [LARGE SCALE GENOMIC DNA]</scope>
    <source>
        <strain>ATCC 27405 / DSM 1237 / JCM 9322 / NBRC 103400 / NCIMB 10682 / NRRL B-4536 / VPI 7372</strain>
    </source>
</reference>
<organism>
    <name type="scientific">Acetivibrio thermocellus (strain ATCC 27405 / DSM 1237 / JCM 9322 / NBRC 103400 / NCIMB 10682 / NRRL B-4536 / VPI 7372)</name>
    <name type="common">Clostridium thermocellum</name>
    <dbReference type="NCBI Taxonomy" id="203119"/>
    <lineage>
        <taxon>Bacteria</taxon>
        <taxon>Bacillati</taxon>
        <taxon>Bacillota</taxon>
        <taxon>Clostridia</taxon>
        <taxon>Eubacteriales</taxon>
        <taxon>Oscillospiraceae</taxon>
        <taxon>Acetivibrio</taxon>
    </lineage>
</organism>
<dbReference type="EMBL" id="CP000568">
    <property type="protein sequence ID" value="ABN51333.1"/>
    <property type="molecule type" value="Genomic_DNA"/>
</dbReference>
<dbReference type="RefSeq" id="WP_011837750.1">
    <property type="nucleotide sequence ID" value="NC_009012.1"/>
</dbReference>
<dbReference type="SMR" id="A3DBK4"/>
<dbReference type="STRING" id="203119.Cthe_0092"/>
<dbReference type="GeneID" id="35806056"/>
<dbReference type="KEGG" id="cth:Cthe_0092"/>
<dbReference type="eggNOG" id="COG0850">
    <property type="taxonomic scope" value="Bacteria"/>
</dbReference>
<dbReference type="HOGENOM" id="CLU_048711_2_0_9"/>
<dbReference type="OrthoDB" id="9790810at2"/>
<dbReference type="Proteomes" id="UP000002145">
    <property type="component" value="Chromosome"/>
</dbReference>
<dbReference type="GO" id="GO:0000902">
    <property type="term" value="P:cell morphogenesis"/>
    <property type="evidence" value="ECO:0007669"/>
    <property type="project" value="InterPro"/>
</dbReference>
<dbReference type="GO" id="GO:0000917">
    <property type="term" value="P:division septum assembly"/>
    <property type="evidence" value="ECO:0007669"/>
    <property type="project" value="UniProtKB-KW"/>
</dbReference>
<dbReference type="GO" id="GO:1901891">
    <property type="term" value="P:regulation of cell septum assembly"/>
    <property type="evidence" value="ECO:0007669"/>
    <property type="project" value="InterPro"/>
</dbReference>
<dbReference type="Gene3D" id="2.160.20.70">
    <property type="match status" value="1"/>
</dbReference>
<dbReference type="Gene3D" id="3.30.160.540">
    <property type="match status" value="1"/>
</dbReference>
<dbReference type="HAMAP" id="MF_00267">
    <property type="entry name" value="MinC"/>
    <property type="match status" value="1"/>
</dbReference>
<dbReference type="InterPro" id="IPR016098">
    <property type="entry name" value="CAP/MinC_C"/>
</dbReference>
<dbReference type="InterPro" id="IPR013033">
    <property type="entry name" value="MinC"/>
</dbReference>
<dbReference type="InterPro" id="IPR036145">
    <property type="entry name" value="MinC_C_sf"/>
</dbReference>
<dbReference type="InterPro" id="IPR055219">
    <property type="entry name" value="MinC_N_1"/>
</dbReference>
<dbReference type="InterPro" id="IPR005526">
    <property type="entry name" value="Septum_form_inhib_MinC_C"/>
</dbReference>
<dbReference type="NCBIfam" id="TIGR01222">
    <property type="entry name" value="minC"/>
    <property type="match status" value="1"/>
</dbReference>
<dbReference type="PANTHER" id="PTHR34108">
    <property type="entry name" value="SEPTUM SITE-DETERMINING PROTEIN MINC"/>
    <property type="match status" value="1"/>
</dbReference>
<dbReference type="PANTHER" id="PTHR34108:SF1">
    <property type="entry name" value="SEPTUM SITE-DETERMINING PROTEIN MINC"/>
    <property type="match status" value="1"/>
</dbReference>
<dbReference type="Pfam" id="PF03775">
    <property type="entry name" value="MinC_C"/>
    <property type="match status" value="1"/>
</dbReference>
<dbReference type="Pfam" id="PF22642">
    <property type="entry name" value="MinC_N_1"/>
    <property type="match status" value="1"/>
</dbReference>
<dbReference type="SUPFAM" id="SSF63848">
    <property type="entry name" value="Cell-division inhibitor MinC, C-terminal domain"/>
    <property type="match status" value="1"/>
</dbReference>
<proteinExistence type="inferred from homology"/>
<comment type="function">
    <text evidence="1">Cell division inhibitor that blocks the formation of polar Z ring septums. Rapidly oscillates between the poles of the cell to destabilize FtsZ filaments that have formed before they mature into polar Z rings. Prevents FtsZ polymerization.</text>
</comment>
<comment type="subunit">
    <text evidence="1">Interacts with MinD and FtsZ.</text>
</comment>
<comment type="similarity">
    <text evidence="1">Belongs to the MinC family.</text>
</comment>
<evidence type="ECO:0000255" key="1">
    <source>
        <dbReference type="HAMAP-Rule" id="MF_00267"/>
    </source>
</evidence>
<gene>
    <name evidence="1" type="primary">minC</name>
    <name type="ordered locus">Cthe_0092</name>
</gene>
<sequence>MSEGSVIFKGSLNGLTIIMKEEEDYDSILKQIEDKIASSGRFFKGAILSVKYRGKKLTEEQERKLFELLRDKSGAKIKSLEEDTEEPVKPEPVQQQPRFRSKIRMSNFYFKGLEEGITKFHRGTVRSGQLVSFDGNLVIIGDVNPGGEVCATGHVIVMGSLRGMVHAGANGNREALVVALNLQPTQLRIADVITRPPDEKETVGQFFPELAYIKDGMVYIERYLPAR</sequence>